<accession>Q6HGE0</accession>
<sequence length="235" mass="27131">MMIMNNFDEKKLIQEFSKIQSELSPRIKLENNFQIEEIQFIAGVDLAYWNVNKTKYGTCCIVIIDYGTKEVVEKVYSYGEIPIPYIPGFLAFRELPLIIEAVKKLTKQPDIYFFDGNGYLHYRHMGIATHASFLLNKPTIGVAKSYLKIRDVDFIMPENLKGSYTDIVINNEVYGRTLRTTKNVKPIFVSCGNWIDLDTSTEIVMNCINNESRLPIPVRLADLETHKMRKKLMEG</sequence>
<dbReference type="EC" id="3.1.21.7" evidence="1"/>
<dbReference type="EMBL" id="AE017355">
    <property type="protein sequence ID" value="AAT60337.1"/>
    <property type="molecule type" value="Genomic_DNA"/>
</dbReference>
<dbReference type="RefSeq" id="YP_037386.1">
    <property type="nucleotide sequence ID" value="NC_005957.1"/>
</dbReference>
<dbReference type="SMR" id="Q6HGE0"/>
<dbReference type="KEGG" id="btk:BT9727_3063"/>
<dbReference type="PATRIC" id="fig|281309.8.peg.3261"/>
<dbReference type="HOGENOM" id="CLU_047631_4_0_9"/>
<dbReference type="Proteomes" id="UP000001301">
    <property type="component" value="Chromosome"/>
</dbReference>
<dbReference type="GO" id="GO:0005737">
    <property type="term" value="C:cytoplasm"/>
    <property type="evidence" value="ECO:0007669"/>
    <property type="project" value="UniProtKB-SubCell"/>
</dbReference>
<dbReference type="GO" id="GO:0043737">
    <property type="term" value="F:deoxyribonuclease V activity"/>
    <property type="evidence" value="ECO:0007669"/>
    <property type="project" value="UniProtKB-UniRule"/>
</dbReference>
<dbReference type="GO" id="GO:0000287">
    <property type="term" value="F:magnesium ion binding"/>
    <property type="evidence" value="ECO:0007669"/>
    <property type="project" value="UniProtKB-UniRule"/>
</dbReference>
<dbReference type="GO" id="GO:0016891">
    <property type="term" value="F:RNA endonuclease activity, producing 5'-phosphomonoesters"/>
    <property type="evidence" value="ECO:0007669"/>
    <property type="project" value="TreeGrafter"/>
</dbReference>
<dbReference type="GO" id="GO:0003727">
    <property type="term" value="F:single-stranded RNA binding"/>
    <property type="evidence" value="ECO:0007669"/>
    <property type="project" value="TreeGrafter"/>
</dbReference>
<dbReference type="GO" id="GO:0006281">
    <property type="term" value="P:DNA repair"/>
    <property type="evidence" value="ECO:0007669"/>
    <property type="project" value="UniProtKB-UniRule"/>
</dbReference>
<dbReference type="CDD" id="cd06559">
    <property type="entry name" value="Endonuclease_V"/>
    <property type="match status" value="1"/>
</dbReference>
<dbReference type="Gene3D" id="3.30.2170.10">
    <property type="entry name" value="archaeoglobus fulgidus dsm 4304 superfamily"/>
    <property type="match status" value="1"/>
</dbReference>
<dbReference type="HAMAP" id="MF_00801">
    <property type="entry name" value="Endonuclease_5"/>
    <property type="match status" value="1"/>
</dbReference>
<dbReference type="InterPro" id="IPR007581">
    <property type="entry name" value="Endonuclease-V"/>
</dbReference>
<dbReference type="PANTHER" id="PTHR28511">
    <property type="entry name" value="ENDONUCLEASE V"/>
    <property type="match status" value="1"/>
</dbReference>
<dbReference type="PANTHER" id="PTHR28511:SF1">
    <property type="entry name" value="ENDONUCLEASE V"/>
    <property type="match status" value="1"/>
</dbReference>
<dbReference type="Pfam" id="PF04493">
    <property type="entry name" value="Endonuclease_5"/>
    <property type="match status" value="1"/>
</dbReference>
<organism>
    <name type="scientific">Bacillus thuringiensis subsp. konkukian (strain 97-27)</name>
    <dbReference type="NCBI Taxonomy" id="281309"/>
    <lineage>
        <taxon>Bacteria</taxon>
        <taxon>Bacillati</taxon>
        <taxon>Bacillota</taxon>
        <taxon>Bacilli</taxon>
        <taxon>Bacillales</taxon>
        <taxon>Bacillaceae</taxon>
        <taxon>Bacillus</taxon>
        <taxon>Bacillus cereus group</taxon>
    </lineage>
</organism>
<proteinExistence type="inferred from homology"/>
<reference key="1">
    <citation type="journal article" date="2006" name="J. Bacteriol.">
        <title>Pathogenomic sequence analysis of Bacillus cereus and Bacillus thuringiensis isolates closely related to Bacillus anthracis.</title>
        <authorList>
            <person name="Han C.S."/>
            <person name="Xie G."/>
            <person name="Challacombe J.F."/>
            <person name="Altherr M.R."/>
            <person name="Bhotika S.S."/>
            <person name="Bruce D."/>
            <person name="Campbell C.S."/>
            <person name="Campbell M.L."/>
            <person name="Chen J."/>
            <person name="Chertkov O."/>
            <person name="Cleland C."/>
            <person name="Dimitrijevic M."/>
            <person name="Doggett N.A."/>
            <person name="Fawcett J.J."/>
            <person name="Glavina T."/>
            <person name="Goodwin L.A."/>
            <person name="Hill K.K."/>
            <person name="Hitchcock P."/>
            <person name="Jackson P.J."/>
            <person name="Keim P."/>
            <person name="Kewalramani A.R."/>
            <person name="Longmire J."/>
            <person name="Lucas S."/>
            <person name="Malfatti S."/>
            <person name="McMurry K."/>
            <person name="Meincke L.J."/>
            <person name="Misra M."/>
            <person name="Moseman B.L."/>
            <person name="Mundt M."/>
            <person name="Munk A.C."/>
            <person name="Okinaka R.T."/>
            <person name="Parson-Quintana B."/>
            <person name="Reilly L.P."/>
            <person name="Richardson P."/>
            <person name="Robinson D.L."/>
            <person name="Rubin E."/>
            <person name="Saunders E."/>
            <person name="Tapia R."/>
            <person name="Tesmer J.G."/>
            <person name="Thayer N."/>
            <person name="Thompson L.S."/>
            <person name="Tice H."/>
            <person name="Ticknor L.O."/>
            <person name="Wills P.L."/>
            <person name="Brettin T.S."/>
            <person name="Gilna P."/>
        </authorList>
    </citation>
    <scope>NUCLEOTIDE SEQUENCE [LARGE SCALE GENOMIC DNA]</scope>
    <source>
        <strain>97-27</strain>
    </source>
</reference>
<protein>
    <recommendedName>
        <fullName evidence="1">Endonuclease V</fullName>
        <ecNumber evidence="1">3.1.21.7</ecNumber>
    </recommendedName>
    <alternativeName>
        <fullName evidence="1">Deoxyinosine 3'endonuclease</fullName>
    </alternativeName>
    <alternativeName>
        <fullName evidence="1">Deoxyribonuclease V</fullName>
        <shortName evidence="1">DNase V</shortName>
    </alternativeName>
</protein>
<gene>
    <name evidence="1" type="primary">nfi</name>
    <name type="ordered locus">BT9727_3063</name>
</gene>
<keyword id="KW-0963">Cytoplasm</keyword>
<keyword id="KW-0227">DNA damage</keyword>
<keyword id="KW-0234">DNA repair</keyword>
<keyword id="KW-0255">Endonuclease</keyword>
<keyword id="KW-0378">Hydrolase</keyword>
<keyword id="KW-0460">Magnesium</keyword>
<keyword id="KW-0479">Metal-binding</keyword>
<keyword id="KW-0540">Nuclease</keyword>
<comment type="function">
    <text evidence="1">DNA repair enzyme involved in the repair of deaminated bases. Selectively cleaves double-stranded DNA at the second phosphodiester bond 3' to a deoxyinosine leaving behind the intact lesion on the nicked DNA.</text>
</comment>
<comment type="catalytic activity">
    <reaction evidence="1">
        <text>Endonucleolytic cleavage at apurinic or apyrimidinic sites to products with a 5'-phosphate.</text>
        <dbReference type="EC" id="3.1.21.7"/>
    </reaction>
</comment>
<comment type="cofactor">
    <cofactor evidence="1">
        <name>Mg(2+)</name>
        <dbReference type="ChEBI" id="CHEBI:18420"/>
    </cofactor>
</comment>
<comment type="subcellular location">
    <subcellularLocation>
        <location evidence="1">Cytoplasm</location>
    </subcellularLocation>
</comment>
<comment type="similarity">
    <text evidence="1">Belongs to the endonuclease V family.</text>
</comment>
<feature type="chain" id="PRO_0000159657" description="Endonuclease V">
    <location>
        <begin position="1"/>
        <end position="235"/>
    </location>
</feature>
<feature type="binding site" evidence="1">
    <location>
        <position position="45"/>
    </location>
    <ligand>
        <name>Mg(2+)</name>
        <dbReference type="ChEBI" id="CHEBI:18420"/>
    </ligand>
</feature>
<feature type="binding site" evidence="1">
    <location>
        <position position="115"/>
    </location>
    <ligand>
        <name>Mg(2+)</name>
        <dbReference type="ChEBI" id="CHEBI:18420"/>
    </ligand>
</feature>
<feature type="site" description="Interaction with target DNA" evidence="1">
    <location>
        <position position="85"/>
    </location>
</feature>
<name>NFI_BACHK</name>
<evidence type="ECO:0000255" key="1">
    <source>
        <dbReference type="HAMAP-Rule" id="MF_00801"/>
    </source>
</evidence>